<name>ARSC_BREBN</name>
<dbReference type="EC" id="1.20.4.4" evidence="1"/>
<dbReference type="EMBL" id="AP008955">
    <property type="protein sequence ID" value="BAH44311.1"/>
    <property type="molecule type" value="Genomic_DNA"/>
</dbReference>
<dbReference type="RefSeq" id="WP_015891621.1">
    <property type="nucleotide sequence ID" value="NC_012491.1"/>
</dbReference>
<dbReference type="SMR" id="C0ZEV2"/>
<dbReference type="STRING" id="358681.BBR47_33340"/>
<dbReference type="GeneID" id="95753715"/>
<dbReference type="KEGG" id="bbe:BBR47_33340"/>
<dbReference type="eggNOG" id="COG0394">
    <property type="taxonomic scope" value="Bacteria"/>
</dbReference>
<dbReference type="HOGENOM" id="CLU_071415_3_2_9"/>
<dbReference type="Proteomes" id="UP000001877">
    <property type="component" value="Chromosome"/>
</dbReference>
<dbReference type="GO" id="GO:0005737">
    <property type="term" value="C:cytoplasm"/>
    <property type="evidence" value="ECO:0007669"/>
    <property type="project" value="UniProtKB-SubCell"/>
</dbReference>
<dbReference type="GO" id="GO:0030612">
    <property type="term" value="F:arsenate reductase (thioredoxin) activity"/>
    <property type="evidence" value="ECO:0007669"/>
    <property type="project" value="UniProtKB-UniRule"/>
</dbReference>
<dbReference type="GO" id="GO:0004725">
    <property type="term" value="F:protein tyrosine phosphatase activity"/>
    <property type="evidence" value="ECO:0007669"/>
    <property type="project" value="InterPro"/>
</dbReference>
<dbReference type="GO" id="GO:0046685">
    <property type="term" value="P:response to arsenic-containing substance"/>
    <property type="evidence" value="ECO:0007669"/>
    <property type="project" value="UniProtKB-KW"/>
</dbReference>
<dbReference type="CDD" id="cd16345">
    <property type="entry name" value="LMWP_ArsC"/>
    <property type="match status" value="1"/>
</dbReference>
<dbReference type="FunFam" id="3.40.50.2300:FF:000237">
    <property type="entry name" value="Arsenate reductase"/>
    <property type="match status" value="1"/>
</dbReference>
<dbReference type="Gene3D" id="3.40.50.2300">
    <property type="match status" value="1"/>
</dbReference>
<dbReference type="HAMAP" id="MF_01624">
    <property type="entry name" value="Arsenate_reduct"/>
    <property type="match status" value="1"/>
</dbReference>
<dbReference type="InterPro" id="IPR014064">
    <property type="entry name" value="Arsenate_reductase_ArsC"/>
</dbReference>
<dbReference type="InterPro" id="IPR023485">
    <property type="entry name" value="Ptyr_pPase"/>
</dbReference>
<dbReference type="InterPro" id="IPR036196">
    <property type="entry name" value="Ptyr_pPase_sf"/>
</dbReference>
<dbReference type="NCBIfam" id="TIGR02691">
    <property type="entry name" value="arsC_pI258_fam"/>
    <property type="match status" value="1"/>
</dbReference>
<dbReference type="NCBIfam" id="NF010053">
    <property type="entry name" value="PRK13530.1"/>
    <property type="match status" value="1"/>
</dbReference>
<dbReference type="PANTHER" id="PTHR43428">
    <property type="entry name" value="ARSENATE REDUCTASE"/>
    <property type="match status" value="1"/>
</dbReference>
<dbReference type="PANTHER" id="PTHR43428:SF1">
    <property type="entry name" value="ARSENATE REDUCTASE"/>
    <property type="match status" value="1"/>
</dbReference>
<dbReference type="Pfam" id="PF01451">
    <property type="entry name" value="LMWPc"/>
    <property type="match status" value="1"/>
</dbReference>
<dbReference type="SMART" id="SM00226">
    <property type="entry name" value="LMWPc"/>
    <property type="match status" value="1"/>
</dbReference>
<dbReference type="SUPFAM" id="SSF52788">
    <property type="entry name" value="Phosphotyrosine protein phosphatases I"/>
    <property type="match status" value="1"/>
</dbReference>
<evidence type="ECO:0000255" key="1">
    <source>
        <dbReference type="HAMAP-Rule" id="MF_01624"/>
    </source>
</evidence>
<keyword id="KW-0059">Arsenical resistance</keyword>
<keyword id="KW-0963">Cytoplasm</keyword>
<keyword id="KW-1015">Disulfide bond</keyword>
<keyword id="KW-0560">Oxidoreductase</keyword>
<keyword id="KW-0676">Redox-active center</keyword>
<keyword id="KW-1185">Reference proteome</keyword>
<protein>
    <recommendedName>
        <fullName evidence="1">Arsenate reductase</fullName>
        <ecNumber evidence="1">1.20.4.4</ecNumber>
    </recommendedName>
</protein>
<sequence>MENKKTIYFLCTGNSCRSQMAEAWGKKYLGNAWNVFSAGIEAHGVNPNAVRAMKEVGIDISDQTSDVIDSDILNKADLIVTLCSHADSVCPTTPTHVNRVHWGFDDPAGKEWPEFQRVRDEIGARIKKFAETGE</sequence>
<feature type="chain" id="PRO_1000186119" description="Arsenate reductase">
    <location>
        <begin position="1"/>
        <end position="134"/>
    </location>
</feature>
<feature type="active site" description="Nucleophile" evidence="1">
    <location>
        <position position="11"/>
    </location>
</feature>
<feature type="active site" description="Nucleophile" evidence="1">
    <location>
        <position position="83"/>
    </location>
</feature>
<feature type="active site" description="Nucleophile" evidence="1">
    <location>
        <position position="90"/>
    </location>
</feature>
<feature type="disulfide bond" description="Redox-active; alternate" evidence="1">
    <location>
        <begin position="11"/>
        <end position="83"/>
    </location>
</feature>
<feature type="disulfide bond" description="Redox-active; alternate" evidence="1">
    <location>
        <begin position="83"/>
        <end position="90"/>
    </location>
</feature>
<reference key="1">
    <citation type="submission" date="2005-03" db="EMBL/GenBank/DDBJ databases">
        <title>Brevibacillus brevis strain 47, complete genome.</title>
        <authorList>
            <person name="Hosoyama A."/>
            <person name="Yamada R."/>
            <person name="Hongo Y."/>
            <person name="Terui Y."/>
            <person name="Ankai A."/>
            <person name="Masuyama W."/>
            <person name="Sekiguchi M."/>
            <person name="Takeda T."/>
            <person name="Asano K."/>
            <person name="Ohji S."/>
            <person name="Ichikawa N."/>
            <person name="Narita S."/>
            <person name="Aoki N."/>
            <person name="Miura H."/>
            <person name="Matsushita S."/>
            <person name="Sekigawa T."/>
            <person name="Yamagata H."/>
            <person name="Yoshikawa H."/>
            <person name="Udaka S."/>
            <person name="Tanikawa S."/>
            <person name="Fujita N."/>
        </authorList>
    </citation>
    <scope>NUCLEOTIDE SEQUENCE [LARGE SCALE GENOMIC DNA]</scope>
    <source>
        <strain>47 / JCM 6285 / NBRC 100599</strain>
    </source>
</reference>
<gene>
    <name evidence="1" type="primary">arsC</name>
    <name type="ordered locus">BBR47_33340</name>
</gene>
<organism>
    <name type="scientific">Brevibacillus brevis (strain 47 / JCM 6285 / NBRC 100599)</name>
    <dbReference type="NCBI Taxonomy" id="358681"/>
    <lineage>
        <taxon>Bacteria</taxon>
        <taxon>Bacillati</taxon>
        <taxon>Bacillota</taxon>
        <taxon>Bacilli</taxon>
        <taxon>Bacillales</taxon>
        <taxon>Paenibacillaceae</taxon>
        <taxon>Brevibacillus</taxon>
    </lineage>
</organism>
<proteinExistence type="inferred from homology"/>
<accession>C0ZEV2</accession>
<comment type="function">
    <text evidence="1">Catalyzes the reduction of arsenate [As(V)] to arsenite [As(III)].</text>
</comment>
<comment type="catalytic activity">
    <reaction evidence="1">
        <text>arsenate + [thioredoxin]-dithiol + H(+) = arsenite + [thioredoxin]-disulfide + H2O</text>
        <dbReference type="Rhea" id="RHEA:43848"/>
        <dbReference type="Rhea" id="RHEA-COMP:10698"/>
        <dbReference type="Rhea" id="RHEA-COMP:10700"/>
        <dbReference type="ChEBI" id="CHEBI:15377"/>
        <dbReference type="ChEBI" id="CHEBI:15378"/>
        <dbReference type="ChEBI" id="CHEBI:29242"/>
        <dbReference type="ChEBI" id="CHEBI:29950"/>
        <dbReference type="ChEBI" id="CHEBI:48597"/>
        <dbReference type="ChEBI" id="CHEBI:50058"/>
        <dbReference type="EC" id="1.20.4.4"/>
    </reaction>
</comment>
<comment type="subcellular location">
    <subcellularLocation>
        <location evidence="1">Cytoplasm</location>
    </subcellularLocation>
</comment>
<comment type="similarity">
    <text evidence="1">Belongs to the low molecular weight phosphotyrosine protein phosphatase family. Thioredoxin-coupled ArsC subfamily.</text>
</comment>